<sequence length="492" mass="54072">MNKSSTKTLIALSMMAVSSGVSAHGYVSETNDGIAGSRAALCKFPTSDTQEKNRDCGAVQWEPQSVEGPEGFPEKGPADGQIAGAGLVQFSELNEQTADRWVKRPITAGAQTFEWTFTANHVTRTWKYYMTKQNWNPNAVLTRDSFDLTPFCELEYNMEKPPLYPNTFSHECIVPEREGYQVILAVWDVGDTAAAFYNVIDVKFDGNGGVVDPTWSQGGQINPTRDLNVGERVFTRVFDASGENVSLSTELVIENETQGQANNWTHALATKINKEQQNIGAGQLNDKGEFSPQYGPNPVYLKAGSGLKSVEIGYQLETVEPVYHLDIEGLASEYTIGDSATELDLSLYATGDMNVELTVYNHGKEALANTNVTLKDGDAKSVVMALSKSEKGHHMLVSRIKNMDGELIKQDMSDFHLVEEAVTPPPSGDFDFVFPEGVKDYKAGTKVLAEDSNVYQCKEFPYSGYCVQWTETATNFAPGVGSDWSMAWDKVN</sequence>
<keyword id="KW-0147">Chitin-binding</keyword>
<keyword id="KW-0964">Secreted</keyword>
<keyword id="KW-0732">Signal</keyword>
<gene>
    <name evidence="1" type="primary">gbpA</name>
    <name type="ordered locus">VFMJ11_A0178</name>
</gene>
<dbReference type="EMBL" id="CP001133">
    <property type="protein sequence ID" value="ACH64094.1"/>
    <property type="molecule type" value="Genomic_DNA"/>
</dbReference>
<dbReference type="RefSeq" id="WP_012535228.1">
    <property type="nucleotide sequence ID" value="NC_011186.1"/>
</dbReference>
<dbReference type="SMR" id="B5ESR7"/>
<dbReference type="CAZy" id="AA10">
    <property type="family name" value="Auxiliary Activities 10"/>
</dbReference>
<dbReference type="CAZy" id="CBM73">
    <property type="family name" value="Carbohydrate-Binding Module Family 73"/>
</dbReference>
<dbReference type="KEGG" id="vfm:VFMJ11_A0178"/>
<dbReference type="HOGENOM" id="CLU_039396_2_0_6"/>
<dbReference type="Proteomes" id="UP000001857">
    <property type="component" value="Chromosome II"/>
</dbReference>
<dbReference type="GO" id="GO:0005576">
    <property type="term" value="C:extracellular region"/>
    <property type="evidence" value="ECO:0007669"/>
    <property type="project" value="UniProtKB-SubCell"/>
</dbReference>
<dbReference type="GO" id="GO:0008061">
    <property type="term" value="F:chitin binding"/>
    <property type="evidence" value="ECO:0007669"/>
    <property type="project" value="UniProtKB-UniRule"/>
</dbReference>
<dbReference type="CDD" id="cd21177">
    <property type="entry name" value="LPMO_AA10"/>
    <property type="match status" value="1"/>
</dbReference>
<dbReference type="Gene3D" id="2.60.40.2550">
    <property type="match status" value="1"/>
</dbReference>
<dbReference type="Gene3D" id="3.30.70.2150">
    <property type="match status" value="1"/>
</dbReference>
<dbReference type="Gene3D" id="2.70.50.50">
    <property type="entry name" value="chitin-binding protein cbp21"/>
    <property type="match status" value="1"/>
</dbReference>
<dbReference type="HAMAP" id="MF_01905">
    <property type="entry name" value="GbpA"/>
    <property type="match status" value="1"/>
</dbReference>
<dbReference type="InterPro" id="IPR004302">
    <property type="entry name" value="Cellulose/chitin-bd_N"/>
</dbReference>
<dbReference type="InterPro" id="IPR041029">
    <property type="entry name" value="GbpA_2"/>
</dbReference>
<dbReference type="InterPro" id="IPR054063">
    <property type="entry name" value="GbpA_D3"/>
</dbReference>
<dbReference type="InterPro" id="IPR020879">
    <property type="entry name" value="GlcNAc-bd_A"/>
</dbReference>
<dbReference type="InterPro" id="IPR051024">
    <property type="entry name" value="GlcNAc_Chitin_IntDeg"/>
</dbReference>
<dbReference type="InterPro" id="IPR014756">
    <property type="entry name" value="Ig_E-set"/>
</dbReference>
<dbReference type="NCBIfam" id="NF009690">
    <property type="entry name" value="PRK13211.1"/>
    <property type="match status" value="1"/>
</dbReference>
<dbReference type="PANTHER" id="PTHR34823:SF1">
    <property type="entry name" value="CHITIN-BINDING TYPE-4 DOMAIN-CONTAINING PROTEIN"/>
    <property type="match status" value="1"/>
</dbReference>
<dbReference type="PANTHER" id="PTHR34823">
    <property type="entry name" value="GLCNAC-BINDING PROTEIN A"/>
    <property type="match status" value="1"/>
</dbReference>
<dbReference type="Pfam" id="PF18416">
    <property type="entry name" value="GbpA_2"/>
    <property type="match status" value="1"/>
</dbReference>
<dbReference type="Pfam" id="PF21868">
    <property type="entry name" value="GbpA_D3"/>
    <property type="match status" value="1"/>
</dbReference>
<dbReference type="Pfam" id="PF03067">
    <property type="entry name" value="LPMO_10"/>
    <property type="match status" value="1"/>
</dbReference>
<dbReference type="SUPFAM" id="SSF81296">
    <property type="entry name" value="E set domains"/>
    <property type="match status" value="1"/>
</dbReference>
<proteinExistence type="inferred from homology"/>
<name>GBPA_ALIFM</name>
<protein>
    <recommendedName>
        <fullName evidence="1">GlcNAc-binding protein A</fullName>
    </recommendedName>
</protein>
<accession>B5ESR7</accession>
<feature type="signal peptide" evidence="1">
    <location>
        <begin position="1"/>
        <end position="23"/>
    </location>
</feature>
<feature type="chain" id="PRO_1000188769" description="GlcNAc-binding protein A">
    <location>
        <begin position="24"/>
        <end position="492"/>
    </location>
</feature>
<feature type="domain" description="Chitin-binding type-4" evidence="1">
    <location>
        <begin position="24"/>
        <end position="204"/>
    </location>
</feature>
<feature type="domain" description="Chitin-binding type-3" evidence="1">
    <location>
        <begin position="443"/>
        <end position="484"/>
    </location>
</feature>
<organism>
    <name type="scientific">Aliivibrio fischeri (strain MJ11)</name>
    <name type="common">Vibrio fischeri</name>
    <dbReference type="NCBI Taxonomy" id="388396"/>
    <lineage>
        <taxon>Bacteria</taxon>
        <taxon>Pseudomonadati</taxon>
        <taxon>Pseudomonadota</taxon>
        <taxon>Gammaproteobacteria</taxon>
        <taxon>Vibrionales</taxon>
        <taxon>Vibrionaceae</taxon>
        <taxon>Aliivibrio</taxon>
    </lineage>
</organism>
<reference key="1">
    <citation type="submission" date="2008-08" db="EMBL/GenBank/DDBJ databases">
        <title>Complete sequence of Vibrio fischeri strain MJ11.</title>
        <authorList>
            <person name="Mandel M.J."/>
            <person name="Stabb E.V."/>
            <person name="Ruby E.G."/>
            <person name="Ferriera S."/>
            <person name="Johnson J."/>
            <person name="Kravitz S."/>
            <person name="Beeson K."/>
            <person name="Sutton G."/>
            <person name="Rogers Y.-H."/>
            <person name="Friedman R."/>
            <person name="Frazier M."/>
            <person name="Venter J.C."/>
        </authorList>
    </citation>
    <scope>NUCLEOTIDE SEQUENCE [LARGE SCALE GENOMIC DNA]</scope>
    <source>
        <strain>MJ11</strain>
    </source>
</reference>
<evidence type="ECO:0000255" key="1">
    <source>
        <dbReference type="HAMAP-Rule" id="MF_01905"/>
    </source>
</evidence>
<comment type="function">
    <text evidence="1">Probably interacts with GlcNAc residues. May promote attachment to both epithelial cell surfaces and chitin.</text>
</comment>
<comment type="subcellular location">
    <subcellularLocation>
        <location evidence="1">Secreted</location>
    </subcellularLocation>
</comment>
<comment type="similarity">
    <text evidence="1">Belongs to the GbpA family.</text>
</comment>